<sequence length="1118" mass="123319">MKKSVRPAVSRASGERGKPEVAGTTGTGKPVSKSSTAAPLSKVKSSDDLLAAMAGGNPTSSNAVAKTKRTASVGTTASTLDKPKTTSGTTSKRLTSSVTKETNLTRDRLRTSRASANKKQSAAGTVVGDAASGKRSRSQVLVESESRMSKSKSDGQISDKVALEAKVKDLLGLAKSKDVEILHLRSELRDMRVQLGLGGKELQEGPEEEEEEEEEEKPHVSAITAADVESTLILLQEQNQAIREELNLLKSENRMLKDRLNALGFSLEQRLDGSDKLFSYASLSPDLAAGSGQSDGGGTGTLTSSVEGSAPGSLEDLLAGHQHGGSADNLDSESSEVYQAVTSSDDALDAPSGASSSSESECAPSRERSRRGSSGNASEVSVACLTERIHQMEENQHSTAEELQATLQELADLQQITQELNGENERLGEEKVILMDSLCQQSDKLELYGRQIEYLRSLLDEHHVSYVLEEDIKSGRYMELEQRYADLAENARFEREQLLGVQQHLSNTLKMAEQDNAEAQEMIGALKERNHQMERIMESERQGRAAVEAALHEYKDAVSSEQAELSRCRAQLDQERQRVAELYSLHTAGDKNDICQLLEGVRLGKEEAEAKAAKLQEGLEQAHSDLGHLQETFSKLDREYREFREQAQRQLSEQERALEKQRMDLQEKETEIADMKETIFELEDEVEQHRALKLHDNLIITDLENSVKKLQDQKHDMEREIKILHRRLREESMEWRQFQADLQTAVVIANDIKSEAQEEIGDLRRRLQEAQEKNEKLSKELEEVKSRKQDEERGRVYNYMNAVERDLAALRQGMGLSRRSSTSSEPSPTVKTLIKSFDSASQGPPSNGASVTPTVSAAPLPRTPLSPSPMKTPPAAAVSPIQRHSISGSMSAAKPLSSLGDKRPTYTDITIPTEHLLRGSAASRPPSALQRVSNMDSTKTISVSRRSSEEMKRDMSASEGASSTSLMAMSAASAPLSLSSSSPTASVTPTTRSRLREERKDPLSALAREYGGSKRNALLKWCQKKTEGYQNIDITNFSSSWNDGLAFCAVLHTYLPAHIPYQELTSQEKRRNFTLAFQAAESVGIKCTLDINDMVHTERPDWQSVMTYVTAIYKYFET</sequence>
<evidence type="ECO:0000250" key="1"/>
<evidence type="ECO:0000255" key="2"/>
<evidence type="ECO:0000255" key="3">
    <source>
        <dbReference type="PROSITE-ProRule" id="PRU00044"/>
    </source>
</evidence>
<evidence type="ECO:0000256" key="4">
    <source>
        <dbReference type="SAM" id="MobiDB-lite"/>
    </source>
</evidence>
<evidence type="ECO:0000305" key="5"/>
<dbReference type="EMBL" id="AY884301">
    <property type="protein sequence ID" value="AAX84192.1"/>
    <property type="molecule type" value="mRNA"/>
</dbReference>
<dbReference type="RefSeq" id="NP_001072071.1">
    <property type="nucleotide sequence ID" value="NM_001078603.1"/>
</dbReference>
<dbReference type="SMR" id="Q2KN94"/>
<dbReference type="FunCoup" id="Q2KN94">
    <property type="interactions" value="937"/>
</dbReference>
<dbReference type="GeneID" id="777979"/>
<dbReference type="KEGG" id="tru:777979"/>
<dbReference type="CTD" id="561775"/>
<dbReference type="eggNOG" id="KOG4678">
    <property type="taxonomic scope" value="Eukaryota"/>
</dbReference>
<dbReference type="InParanoid" id="Q2KN94"/>
<dbReference type="OrthoDB" id="21607at2759"/>
<dbReference type="Proteomes" id="UP000005226">
    <property type="component" value="Unplaced"/>
</dbReference>
<dbReference type="GO" id="GO:0005737">
    <property type="term" value="C:cytoplasm"/>
    <property type="evidence" value="ECO:0007669"/>
    <property type="project" value="UniProtKB-KW"/>
</dbReference>
<dbReference type="GO" id="GO:0005921">
    <property type="term" value="C:gap junction"/>
    <property type="evidence" value="ECO:0007669"/>
    <property type="project" value="UniProtKB-SubCell"/>
</dbReference>
<dbReference type="GO" id="GO:0005819">
    <property type="term" value="C:spindle"/>
    <property type="evidence" value="ECO:0007669"/>
    <property type="project" value="UniProtKB-SubCell"/>
</dbReference>
<dbReference type="GO" id="GO:0051301">
    <property type="term" value="P:cell division"/>
    <property type="evidence" value="ECO:0007669"/>
    <property type="project" value="UniProtKB-KW"/>
</dbReference>
<dbReference type="CDD" id="cd21199">
    <property type="entry name" value="CH_CYTS"/>
    <property type="match status" value="1"/>
</dbReference>
<dbReference type="FunFam" id="1.10.418.10:FF:000020">
    <property type="entry name" value="Cytospin-A isoform 1"/>
    <property type="match status" value="1"/>
</dbReference>
<dbReference type="Gene3D" id="1.10.418.10">
    <property type="entry name" value="Calponin-like domain"/>
    <property type="match status" value="1"/>
</dbReference>
<dbReference type="InterPro" id="IPR001715">
    <property type="entry name" value="CH_dom"/>
</dbReference>
<dbReference type="InterPro" id="IPR036872">
    <property type="entry name" value="CH_dom_sf"/>
</dbReference>
<dbReference type="InterPro" id="IPR050540">
    <property type="entry name" value="F-actin_Monoox_Mical"/>
</dbReference>
<dbReference type="PANTHER" id="PTHR23167">
    <property type="entry name" value="CALPONIN HOMOLOGY DOMAIN-CONTAINING PROTEIN DDB_G0272472-RELATED"/>
    <property type="match status" value="1"/>
</dbReference>
<dbReference type="PANTHER" id="PTHR23167:SF18">
    <property type="entry name" value="CYTOSPIN-A"/>
    <property type="match status" value="1"/>
</dbReference>
<dbReference type="Pfam" id="PF00307">
    <property type="entry name" value="CH"/>
    <property type="match status" value="1"/>
</dbReference>
<dbReference type="SMART" id="SM00033">
    <property type="entry name" value="CH"/>
    <property type="match status" value="1"/>
</dbReference>
<dbReference type="SUPFAM" id="SSF47576">
    <property type="entry name" value="Calponin-homology domain, CH-domain"/>
    <property type="match status" value="1"/>
</dbReference>
<dbReference type="PROSITE" id="PS50021">
    <property type="entry name" value="CH"/>
    <property type="match status" value="1"/>
</dbReference>
<comment type="function">
    <text evidence="1">Involved in cytokinesis and spindle organization. May play a role in actin cytoskeleton organization and microtubule stabilization and hence required for proper cell adhesion and migration (By similarity).</text>
</comment>
<comment type="subunit">
    <text evidence="1">May interact with both microtubules and actin cytoskeleton.</text>
</comment>
<comment type="subcellular location">
    <subcellularLocation>
        <location evidence="1">Cytoplasm</location>
        <location evidence="1">Cytoskeleton</location>
    </subcellularLocation>
    <subcellularLocation>
        <location evidence="1">Cytoplasm</location>
        <location evidence="1">Cytoskeleton</location>
        <location evidence="1">Spindle</location>
    </subcellularLocation>
    <subcellularLocation>
        <location evidence="1">Cell junction</location>
        <location evidence="1">Gap junction</location>
    </subcellularLocation>
    <text evidence="1">Colocalizes with beta-tubulin, acetylated alpha-tubulin and F-actin. Also observed in a ring around gamma-tubulin containing centrioles possibly in the microtubule organizing center (By similarity).</text>
</comment>
<comment type="similarity">
    <text evidence="5">Belongs to the cytospin-A family.</text>
</comment>
<keyword id="KW-0131">Cell cycle</keyword>
<keyword id="KW-0132">Cell division</keyword>
<keyword id="KW-0965">Cell junction</keyword>
<keyword id="KW-0175">Coiled coil</keyword>
<keyword id="KW-0963">Cytoplasm</keyword>
<keyword id="KW-0206">Cytoskeleton</keyword>
<keyword id="KW-0303">Gap junction</keyword>
<keyword id="KW-1185">Reference proteome</keyword>
<protein>
    <recommendedName>
        <fullName>Cytospin-A</fullName>
    </recommendedName>
    <alternativeName>
        <fullName>SPECC1-like protein</fullName>
    </alternativeName>
    <alternativeName>
        <fullName>Sperm antigen with calponin homology and coiled-coil domains 1-like</fullName>
    </alternativeName>
</protein>
<proteinExistence type="evidence at transcript level"/>
<reference key="1">
    <citation type="submission" date="2005-01" db="EMBL/GenBank/DDBJ databases">
        <title>Characterization of cytospin A as a multiple coiled coil protein involved in cytokinesis and spindle organization.</title>
        <authorList>
            <person name="Huang C.-H."/>
            <person name="Ye T."/>
            <person name="Chen Y."/>
        </authorList>
    </citation>
    <scope>NUCLEOTIDE SEQUENCE [MRNA]</scope>
</reference>
<accession>Q2KN94</accession>
<organism>
    <name type="scientific">Takifugu rubripes</name>
    <name type="common">Japanese pufferfish</name>
    <name type="synonym">Fugu rubripes</name>
    <dbReference type="NCBI Taxonomy" id="31033"/>
    <lineage>
        <taxon>Eukaryota</taxon>
        <taxon>Metazoa</taxon>
        <taxon>Chordata</taxon>
        <taxon>Craniata</taxon>
        <taxon>Vertebrata</taxon>
        <taxon>Euteleostomi</taxon>
        <taxon>Actinopterygii</taxon>
        <taxon>Neopterygii</taxon>
        <taxon>Teleostei</taxon>
        <taxon>Neoteleostei</taxon>
        <taxon>Acanthomorphata</taxon>
        <taxon>Eupercaria</taxon>
        <taxon>Tetraodontiformes</taxon>
        <taxon>Tetradontoidea</taxon>
        <taxon>Tetraodontidae</taxon>
        <taxon>Takifugu</taxon>
    </lineage>
</organism>
<gene>
    <name type="primary">specc1l</name>
    <name type="synonym">cytsa</name>
</gene>
<feature type="chain" id="PRO_0000231024" description="Cytospin-A">
    <location>
        <begin position="1"/>
        <end position="1118"/>
    </location>
</feature>
<feature type="domain" description="Calponin-homology (CH)" evidence="3">
    <location>
        <begin position="1012"/>
        <end position="1117"/>
    </location>
</feature>
<feature type="region of interest" description="Disordered" evidence="4">
    <location>
        <begin position="1"/>
        <end position="157"/>
    </location>
</feature>
<feature type="region of interest" description="Disordered" evidence="4">
    <location>
        <begin position="198"/>
        <end position="221"/>
    </location>
</feature>
<feature type="region of interest" description="Disordered" evidence="4">
    <location>
        <begin position="289"/>
        <end position="379"/>
    </location>
</feature>
<feature type="region of interest" description="Disordered" evidence="4">
    <location>
        <begin position="771"/>
        <end position="790"/>
    </location>
</feature>
<feature type="region of interest" description="Disordered" evidence="4">
    <location>
        <begin position="837"/>
        <end position="876"/>
    </location>
</feature>
<feature type="region of interest" description="Disordered" evidence="4">
    <location>
        <begin position="920"/>
        <end position="1001"/>
    </location>
</feature>
<feature type="coiled-coil region" evidence="2">
    <location>
        <begin position="225"/>
        <end position="264"/>
    </location>
</feature>
<feature type="coiled-coil region" evidence="2">
    <location>
        <begin position="384"/>
        <end position="438"/>
    </location>
</feature>
<feature type="coiled-coil region" evidence="2">
    <location>
        <begin position="475"/>
        <end position="796"/>
    </location>
</feature>
<feature type="compositionally biased region" description="Polar residues" evidence="4">
    <location>
        <begin position="57"/>
        <end position="102"/>
    </location>
</feature>
<feature type="compositionally biased region" description="Polar residues" evidence="4">
    <location>
        <begin position="112"/>
        <end position="123"/>
    </location>
</feature>
<feature type="compositionally biased region" description="Basic and acidic residues" evidence="4">
    <location>
        <begin position="144"/>
        <end position="153"/>
    </location>
</feature>
<feature type="compositionally biased region" description="Acidic residues" evidence="4">
    <location>
        <begin position="204"/>
        <end position="215"/>
    </location>
</feature>
<feature type="compositionally biased region" description="Low complexity" evidence="4">
    <location>
        <begin position="343"/>
        <end position="363"/>
    </location>
</feature>
<feature type="compositionally biased region" description="Polar residues" evidence="4">
    <location>
        <begin position="838"/>
        <end position="855"/>
    </location>
</feature>
<feature type="compositionally biased region" description="Pro residues" evidence="4">
    <location>
        <begin position="861"/>
        <end position="872"/>
    </location>
</feature>
<feature type="compositionally biased region" description="Polar residues" evidence="4">
    <location>
        <begin position="930"/>
        <end position="945"/>
    </location>
</feature>
<feature type="compositionally biased region" description="Basic and acidic residues" evidence="4">
    <location>
        <begin position="946"/>
        <end position="956"/>
    </location>
</feature>
<feature type="compositionally biased region" description="Low complexity" evidence="4">
    <location>
        <begin position="961"/>
        <end position="986"/>
    </location>
</feature>
<name>CYTSA_TAKRU</name>